<name>PUR5_STRFR</name>
<evidence type="ECO:0000250" key="1"/>
<evidence type="ECO:0000305" key="2"/>
<dbReference type="EC" id="6.3.3.1"/>
<dbReference type="EMBL" id="L33872">
    <property type="protein sequence ID" value="AAA62389.1"/>
    <property type="molecule type" value="Genomic_DNA"/>
</dbReference>
<dbReference type="SMR" id="P40178"/>
<dbReference type="STRING" id="1906.SFRA_10730"/>
<dbReference type="eggNOG" id="COG0150">
    <property type="taxonomic scope" value="Bacteria"/>
</dbReference>
<dbReference type="UniPathway" id="UPA00074">
    <property type="reaction ID" value="UER00129"/>
</dbReference>
<dbReference type="GO" id="GO:0005829">
    <property type="term" value="C:cytosol"/>
    <property type="evidence" value="ECO:0007669"/>
    <property type="project" value="TreeGrafter"/>
</dbReference>
<dbReference type="GO" id="GO:0005524">
    <property type="term" value="F:ATP binding"/>
    <property type="evidence" value="ECO:0007669"/>
    <property type="project" value="UniProtKB-KW"/>
</dbReference>
<dbReference type="GO" id="GO:0004637">
    <property type="term" value="F:phosphoribosylamine-glycine ligase activity"/>
    <property type="evidence" value="ECO:0007669"/>
    <property type="project" value="TreeGrafter"/>
</dbReference>
<dbReference type="GO" id="GO:0004641">
    <property type="term" value="F:phosphoribosylformylglycinamidine cyclo-ligase activity"/>
    <property type="evidence" value="ECO:0007669"/>
    <property type="project" value="UniProtKB-EC"/>
</dbReference>
<dbReference type="GO" id="GO:0006189">
    <property type="term" value="P:'de novo' IMP biosynthetic process"/>
    <property type="evidence" value="ECO:0007669"/>
    <property type="project" value="UniProtKB-UniPathway"/>
</dbReference>
<dbReference type="GO" id="GO:0046084">
    <property type="term" value="P:adenine biosynthetic process"/>
    <property type="evidence" value="ECO:0007669"/>
    <property type="project" value="TreeGrafter"/>
</dbReference>
<dbReference type="FunFam" id="3.90.650.10:FF:000016">
    <property type="entry name" value="Phosphoribosylformylglycinamidine cyclo-ligase"/>
    <property type="match status" value="1"/>
</dbReference>
<dbReference type="Gene3D" id="3.90.650.10">
    <property type="entry name" value="PurM-like C-terminal domain"/>
    <property type="match status" value="1"/>
</dbReference>
<dbReference type="InterPro" id="IPR010918">
    <property type="entry name" value="PurM-like_C_dom"/>
</dbReference>
<dbReference type="InterPro" id="IPR036676">
    <property type="entry name" value="PurM-like_C_sf"/>
</dbReference>
<dbReference type="InterPro" id="IPR004733">
    <property type="entry name" value="PurM_cligase"/>
</dbReference>
<dbReference type="PANTHER" id="PTHR10520:SF12">
    <property type="entry name" value="TRIFUNCTIONAL PURINE BIOSYNTHETIC PROTEIN ADENOSINE-3"/>
    <property type="match status" value="1"/>
</dbReference>
<dbReference type="PANTHER" id="PTHR10520">
    <property type="entry name" value="TRIFUNCTIONAL PURINE BIOSYNTHETIC PROTEIN ADENOSINE-3-RELATED"/>
    <property type="match status" value="1"/>
</dbReference>
<dbReference type="Pfam" id="PF02769">
    <property type="entry name" value="AIRS_C"/>
    <property type="match status" value="1"/>
</dbReference>
<dbReference type="SUPFAM" id="SSF56042">
    <property type="entry name" value="PurM C-terminal domain-like"/>
    <property type="match status" value="1"/>
</dbReference>
<accession>P40178</accession>
<protein>
    <recommendedName>
        <fullName>Putative phosphoribosylformylglycinamidine cyclo-ligase</fullName>
        <shortName>AIRS</shortName>
        <ecNumber>6.3.3.1</ecNumber>
    </recommendedName>
    <alternativeName>
        <fullName>AIR synthase</fullName>
    </alternativeName>
    <alternativeName>
        <fullName>Phosphoribosyl-aminoimidazole synthetase</fullName>
    </alternativeName>
</protein>
<comment type="catalytic activity">
    <reaction>
        <text>2-formamido-N(1)-(5-O-phospho-beta-D-ribosyl)acetamidine + ATP = 5-amino-1-(5-phospho-beta-D-ribosyl)imidazole + ADP + phosphate + H(+)</text>
        <dbReference type="Rhea" id="RHEA:23032"/>
        <dbReference type="ChEBI" id="CHEBI:15378"/>
        <dbReference type="ChEBI" id="CHEBI:30616"/>
        <dbReference type="ChEBI" id="CHEBI:43474"/>
        <dbReference type="ChEBI" id="CHEBI:137981"/>
        <dbReference type="ChEBI" id="CHEBI:147287"/>
        <dbReference type="ChEBI" id="CHEBI:456216"/>
        <dbReference type="EC" id="6.3.3.1"/>
    </reaction>
</comment>
<comment type="pathway">
    <text>Purine metabolism; IMP biosynthesis via de novo pathway; 5-amino-1-(5-phospho-D-ribosyl)imidazole from N(2)-formyl-N(1)-(5-phospho-D-ribosyl)glycinamide: step 2/2.</text>
</comment>
<comment type="subcellular location">
    <subcellularLocation>
        <location evidence="1">Cytoplasm</location>
    </subcellularLocation>
</comment>
<comment type="similarity">
    <text evidence="2">Belongs to the AIR synthase family.</text>
</comment>
<organism>
    <name type="scientific">Streptomyces fradiae</name>
    <name type="common">Streptomyces roseoflavus</name>
    <dbReference type="NCBI Taxonomy" id="1906"/>
    <lineage>
        <taxon>Bacteria</taxon>
        <taxon>Bacillati</taxon>
        <taxon>Actinomycetota</taxon>
        <taxon>Actinomycetes</taxon>
        <taxon>Kitasatosporales</taxon>
        <taxon>Streptomycetaceae</taxon>
        <taxon>Streptomyces</taxon>
    </lineage>
</organism>
<proteinExistence type="inferred from homology"/>
<sequence length="182" mass="18971">IRAGDAVIAMASSGLHSNGYSLVRHVLFDGAGYALDREIPEFGRTLGEELLEPTRIYSLDCLALTRTTEVHAFSHITGGGLANNLARVIPDGLHATVDRATWTPAPVFGLVGSAGSVERTELEKTLNMGVGMIAVVAPEGADAALATLADRGVDAWICGEITDRGESGEHAEAVALTGDYAV</sequence>
<gene>
    <name type="primary">purM</name>
</gene>
<reference key="1">
    <citation type="journal article" date="1994" name="J. Bacteriol.">
        <title>Amino acid catabolism and antibiotic synthesis: valine is a source of precursors for macrolide biosynthesis in Streptomyces ambofaciens and Streptomyces fradiae.</title>
        <authorList>
            <person name="Tang L."/>
            <person name="Zhang Y.X."/>
            <person name="Hutchinson C.R."/>
        </authorList>
    </citation>
    <scope>NUCLEOTIDE SEQUENCE [GENOMIC DNA]</scope>
    <source>
        <strain>C373.1</strain>
    </source>
</reference>
<keyword id="KW-0067">ATP-binding</keyword>
<keyword id="KW-0963">Cytoplasm</keyword>
<keyword id="KW-0436">Ligase</keyword>
<keyword id="KW-0547">Nucleotide-binding</keyword>
<keyword id="KW-0658">Purine biosynthesis</keyword>
<feature type="chain" id="PRO_0000148257" description="Putative phosphoribosylformylglycinamidine cyclo-ligase">
    <location>
        <begin position="1" status="less than"/>
        <end position="182"/>
    </location>
</feature>
<feature type="non-terminal residue">
    <location>
        <position position="1"/>
    </location>
</feature>